<geneLocation type="mitochondrion"/>
<name>CYB_DIPHE</name>
<feature type="chain" id="PRO_0000060888" description="Cytochrome b">
    <location>
        <begin position="1" status="less than"/>
        <end position="79" status="greater than"/>
    </location>
</feature>
<feature type="transmembrane region" description="Helical" evidence="2">
    <location>
        <begin position="1" status="less than"/>
        <end position="7"/>
    </location>
</feature>
<feature type="transmembrane region" description="Helical" evidence="2">
    <location>
        <begin position="31"/>
        <end position="52"/>
    </location>
</feature>
<feature type="transmembrane region" description="Helical" evidence="2">
    <location>
        <begin position="67"/>
        <end position="79" status="greater than"/>
    </location>
</feature>
<feature type="binding site" description="axial binding residue" evidence="2">
    <location>
        <position position="37"/>
    </location>
    <ligand>
        <name>heme b</name>
        <dbReference type="ChEBI" id="CHEBI:60344"/>
        <label>b562</label>
    </ligand>
    <ligandPart>
        <name>Fe</name>
        <dbReference type="ChEBI" id="CHEBI:18248"/>
    </ligandPart>
</feature>
<feature type="binding site" description="axial binding residue" evidence="2">
    <location>
        <position position="51"/>
    </location>
    <ligand>
        <name>heme b</name>
        <dbReference type="ChEBI" id="CHEBI:60344"/>
        <label>b566</label>
    </ligand>
    <ligandPart>
        <name>Fe</name>
        <dbReference type="ChEBI" id="CHEBI:18248"/>
    </ligandPart>
</feature>
<feature type="non-terminal residue">
    <location>
        <position position="1"/>
    </location>
</feature>
<feature type="non-terminal residue">
    <location>
        <position position="79"/>
    </location>
</feature>
<keyword id="KW-0249">Electron transport</keyword>
<keyword id="KW-0349">Heme</keyword>
<keyword id="KW-0408">Iron</keyword>
<keyword id="KW-0472">Membrane</keyword>
<keyword id="KW-0479">Metal-binding</keyword>
<keyword id="KW-0496">Mitochondrion</keyword>
<keyword id="KW-0999">Mitochondrion inner membrane</keyword>
<keyword id="KW-0679">Respiratory chain</keyword>
<keyword id="KW-0812">Transmembrane</keyword>
<keyword id="KW-1133">Transmembrane helix</keyword>
<keyword id="KW-0813">Transport</keyword>
<keyword id="KW-0830">Ubiquinone</keyword>
<dbReference type="EMBL" id="M25683">
    <property type="protein sequence ID" value="AAA31714.1"/>
    <property type="molecule type" value="Genomic_DNA"/>
</dbReference>
<dbReference type="PIR" id="C33285">
    <property type="entry name" value="C33285"/>
</dbReference>
<dbReference type="SMR" id="P16358"/>
<dbReference type="GO" id="GO:0005743">
    <property type="term" value="C:mitochondrial inner membrane"/>
    <property type="evidence" value="ECO:0007669"/>
    <property type="project" value="UniProtKB-SubCell"/>
</dbReference>
<dbReference type="GO" id="GO:0046872">
    <property type="term" value="F:metal ion binding"/>
    <property type="evidence" value="ECO:0007669"/>
    <property type="project" value="UniProtKB-KW"/>
</dbReference>
<dbReference type="GO" id="GO:0008121">
    <property type="term" value="F:ubiquinol-cytochrome-c reductase activity"/>
    <property type="evidence" value="ECO:0007669"/>
    <property type="project" value="TreeGrafter"/>
</dbReference>
<dbReference type="GO" id="GO:0006122">
    <property type="term" value="P:mitochondrial electron transport, ubiquinol to cytochrome c"/>
    <property type="evidence" value="ECO:0007669"/>
    <property type="project" value="TreeGrafter"/>
</dbReference>
<dbReference type="Gene3D" id="1.20.810.10">
    <property type="entry name" value="Cytochrome Bc1 Complex, Chain C"/>
    <property type="match status" value="1"/>
</dbReference>
<dbReference type="InterPro" id="IPR005797">
    <property type="entry name" value="Cyt_b/b6_N"/>
</dbReference>
<dbReference type="InterPro" id="IPR027387">
    <property type="entry name" value="Cytb/b6-like_sf"/>
</dbReference>
<dbReference type="InterPro" id="IPR016174">
    <property type="entry name" value="Di-haem_cyt_TM"/>
</dbReference>
<dbReference type="PANTHER" id="PTHR19271">
    <property type="entry name" value="CYTOCHROME B"/>
    <property type="match status" value="1"/>
</dbReference>
<dbReference type="PANTHER" id="PTHR19271:SF16">
    <property type="entry name" value="CYTOCHROME B"/>
    <property type="match status" value="1"/>
</dbReference>
<dbReference type="Pfam" id="PF00033">
    <property type="entry name" value="Cytochrome_B"/>
    <property type="match status" value="1"/>
</dbReference>
<dbReference type="SUPFAM" id="SSF81342">
    <property type="entry name" value="Transmembrane di-heme cytochromes"/>
    <property type="match status" value="1"/>
</dbReference>
<dbReference type="PROSITE" id="PS51002">
    <property type="entry name" value="CYTB_NTER"/>
    <property type="match status" value="1"/>
</dbReference>
<sequence length="79" mass="9060">SALFLAMHYTPDTITAFSSVTHICRDVNYGWLIRYIHANGASLFFICLYLHIGRGIYYGSYSYMETWNIGIILLILTMA</sequence>
<gene>
    <name type="primary">MT-CYB</name>
    <name type="synonym">COB</name>
    <name type="synonym">CYTB</name>
    <name type="synonym">MTCYB</name>
</gene>
<accession>P16358</accession>
<reference key="1">
    <citation type="journal article" date="1989" name="Proc. Natl. Acad. Sci. U.S.A.">
        <title>Dynamics of mitochondrial DNA evolution in animals: amplification and sequencing with conserved primers.</title>
        <authorList>
            <person name="Kocher T.D."/>
            <person name="Thomas W.K."/>
            <person name="Meyer A."/>
            <person name="Edwards S.V."/>
            <person name="Paeaebo S."/>
            <person name="Villablanca F.X."/>
            <person name="Wilson A.C."/>
        </authorList>
    </citation>
    <scope>NUCLEOTIDE SEQUENCE [GENOMIC DNA]</scope>
</reference>
<evidence type="ECO:0000250" key="1"/>
<evidence type="ECO:0000250" key="2">
    <source>
        <dbReference type="UniProtKB" id="P00157"/>
    </source>
</evidence>
<evidence type="ECO:0000255" key="3">
    <source>
        <dbReference type="PROSITE-ProRule" id="PRU00968"/>
    </source>
</evidence>
<protein>
    <recommendedName>
        <fullName>Cytochrome b</fullName>
    </recommendedName>
    <alternativeName>
        <fullName>Complex III subunit 3</fullName>
    </alternativeName>
    <alternativeName>
        <fullName>Complex III subunit III</fullName>
    </alternativeName>
    <alternativeName>
        <fullName>Cytochrome b-c1 complex subunit 3</fullName>
    </alternativeName>
    <alternativeName>
        <fullName>Ubiquinol-cytochrome-c reductase complex cytochrome b subunit</fullName>
    </alternativeName>
</protein>
<organism>
    <name type="scientific">Dipodomys heermanni</name>
    <name type="common">Heermann's kangaroo rat</name>
    <dbReference type="NCBI Taxonomy" id="10018"/>
    <lineage>
        <taxon>Eukaryota</taxon>
        <taxon>Metazoa</taxon>
        <taxon>Chordata</taxon>
        <taxon>Craniata</taxon>
        <taxon>Vertebrata</taxon>
        <taxon>Euteleostomi</taxon>
        <taxon>Mammalia</taxon>
        <taxon>Eutheria</taxon>
        <taxon>Euarchontoglires</taxon>
        <taxon>Glires</taxon>
        <taxon>Rodentia</taxon>
        <taxon>Castorimorpha</taxon>
        <taxon>Heteromyidae</taxon>
        <taxon>Dipodomyinae</taxon>
        <taxon>Dipodomys</taxon>
    </lineage>
</organism>
<comment type="function">
    <text evidence="2">Component of the ubiquinol-cytochrome c reductase complex (complex III or cytochrome b-c1 complex) that is part of the mitochondrial respiratory chain. The b-c1 complex mediates electron transfer from ubiquinol to cytochrome c. Contributes to the generation of a proton gradient across the mitochondrial membrane that is then used for ATP synthesis.</text>
</comment>
<comment type="cofactor">
    <cofactor evidence="2">
        <name>heme b</name>
        <dbReference type="ChEBI" id="CHEBI:60344"/>
    </cofactor>
    <text evidence="2">Binds 2 heme b groups non-covalently.</text>
</comment>
<comment type="subunit">
    <text evidence="2">The cytochrome bc1 complex contains 11 subunits: 3 respiratory subunits (MT-CYB, CYC1 and UQCRFS1), 2 core proteins (UQCRC1 and UQCRC2) and 6 low-molecular weight proteins (UQCRH/QCR6, UQCRB/QCR7, UQCRQ/QCR8, UQCR10/QCR9, UQCR11/QCR10 and a cleavage product of UQCRFS1). This cytochrome bc1 complex then forms a dimer.</text>
</comment>
<comment type="subcellular location">
    <subcellularLocation>
        <location evidence="2">Mitochondrion inner membrane</location>
        <topology evidence="2">Multi-pass membrane protein</topology>
    </subcellularLocation>
</comment>
<comment type="miscellaneous">
    <text evidence="1">Heme 1 (or BL or b562) is low-potential and absorbs at about 562 nm, and heme 2 (or BH or b566) is high-potential and absorbs at about 566 nm.</text>
</comment>
<comment type="similarity">
    <text evidence="3">Belongs to the cytochrome b family.</text>
</comment>
<comment type="caution">
    <text evidence="2">The full-length protein contains only eight transmembrane helices, not nine as predicted by bioinformatics tools.</text>
</comment>
<proteinExistence type="inferred from homology"/>